<reference key="1">
    <citation type="journal article" date="2011" name="J. Bacteriol.">
        <title>Comparative genomics of 28 Salmonella enterica isolates: evidence for CRISPR-mediated adaptive sublineage evolution.</title>
        <authorList>
            <person name="Fricke W.F."/>
            <person name="Mammel M.K."/>
            <person name="McDermott P.F."/>
            <person name="Tartera C."/>
            <person name="White D.G."/>
            <person name="Leclerc J.E."/>
            <person name="Ravel J."/>
            <person name="Cebula T.A."/>
        </authorList>
    </citation>
    <scope>NUCLEOTIDE SEQUENCE [LARGE SCALE GENOMIC DNA]</scope>
    <source>
        <strain>SL483</strain>
    </source>
</reference>
<organism>
    <name type="scientific">Salmonella agona (strain SL483)</name>
    <dbReference type="NCBI Taxonomy" id="454166"/>
    <lineage>
        <taxon>Bacteria</taxon>
        <taxon>Pseudomonadati</taxon>
        <taxon>Pseudomonadota</taxon>
        <taxon>Gammaproteobacteria</taxon>
        <taxon>Enterobacterales</taxon>
        <taxon>Enterobacteriaceae</taxon>
        <taxon>Salmonella</taxon>
    </lineage>
</organism>
<sequence length="616" mass="65635">MALLQISEPGLSAAPHQRRLAAGIDLGTTNSLVATVRSGQVETLPDHEGRHLLPSVVHYQQQGHTVGYAARDNAAQDTANTISSVKRMMGRSLADIQARYPHLPYRFKASVNGLPMIDTAAGLLNPVRVSADILKALAARASESLSGELDGVVITVPAYFDDAQRQGTKDAARLAGLHVLRLLNEPTAAAIAYGLDSGKEGVIAVYDLGGGTFDISILRLSRGVFEVLATGGDSALGGDDFDHLLADYIREQAGIADRSDNRVQRELLDAAIAAKIALSDADTVRVNVAGWQGEITREQFNDLISALVKRTLLACRRALKDAGVDPQDVLEVVMVGGSTRVPLVRERVGEFFGRTPLTAIDPDKVVAIGAAIQADILVGNKPDSEMLLLDVIPLSLGLETMGGLVEKVIPRNTTIPVARAQDFTTFKDGQTAMSIHVMQGERELVQDCRSLARFALRGIPPLPAGGAHIRVTFQVDADGLLSVTAMEKSTGVEASIQVKPSYGLTDGEIASMIKDSMSFAEQDVKARMLAEQKVEAARVLESLTGALTADAALLSAAERQCIDDAAAHLSAVAQGDDVDAIEQAIKNVDKQTQEFAARRMDQSVRRALKGHSVDEV</sequence>
<gene>
    <name evidence="1" type="primary">hscA</name>
    <name type="ordered locus">SeAg_B2694</name>
</gene>
<name>HSCA_SALA4</name>
<feature type="chain" id="PRO_1000131686" description="Chaperone protein HscA">
    <location>
        <begin position="1"/>
        <end position="616"/>
    </location>
</feature>
<accession>B5F1B6</accession>
<dbReference type="EMBL" id="CP001138">
    <property type="protein sequence ID" value="ACH49294.1"/>
    <property type="molecule type" value="Genomic_DNA"/>
</dbReference>
<dbReference type="RefSeq" id="WP_001196674.1">
    <property type="nucleotide sequence ID" value="NC_011149.1"/>
</dbReference>
<dbReference type="SMR" id="B5F1B6"/>
<dbReference type="KEGG" id="sea:SeAg_B2694"/>
<dbReference type="HOGENOM" id="CLU_005965_2_1_6"/>
<dbReference type="Proteomes" id="UP000008819">
    <property type="component" value="Chromosome"/>
</dbReference>
<dbReference type="GO" id="GO:0005524">
    <property type="term" value="F:ATP binding"/>
    <property type="evidence" value="ECO:0007669"/>
    <property type="project" value="UniProtKB-KW"/>
</dbReference>
<dbReference type="GO" id="GO:0016887">
    <property type="term" value="F:ATP hydrolysis activity"/>
    <property type="evidence" value="ECO:0007669"/>
    <property type="project" value="UniProtKB-UniRule"/>
</dbReference>
<dbReference type="GO" id="GO:0140662">
    <property type="term" value="F:ATP-dependent protein folding chaperone"/>
    <property type="evidence" value="ECO:0007669"/>
    <property type="project" value="InterPro"/>
</dbReference>
<dbReference type="GO" id="GO:0051082">
    <property type="term" value="F:unfolded protein binding"/>
    <property type="evidence" value="ECO:0007669"/>
    <property type="project" value="InterPro"/>
</dbReference>
<dbReference type="GO" id="GO:0016226">
    <property type="term" value="P:iron-sulfur cluster assembly"/>
    <property type="evidence" value="ECO:0007669"/>
    <property type="project" value="InterPro"/>
</dbReference>
<dbReference type="CDD" id="cd10236">
    <property type="entry name" value="ASKHA_NBD_HSP70_HscA"/>
    <property type="match status" value="1"/>
</dbReference>
<dbReference type="FunFam" id="1.20.1270.10:FF:000006">
    <property type="entry name" value="Chaperone protein HscA"/>
    <property type="match status" value="1"/>
</dbReference>
<dbReference type="FunFam" id="3.30.420.40:FF:000046">
    <property type="entry name" value="Chaperone protein HscA"/>
    <property type="match status" value="1"/>
</dbReference>
<dbReference type="FunFam" id="3.90.640.10:FF:000013">
    <property type="entry name" value="Chaperone protein HscA"/>
    <property type="match status" value="1"/>
</dbReference>
<dbReference type="FunFam" id="2.60.34.10:FF:000005">
    <property type="entry name" value="Chaperone protein HscA homolog"/>
    <property type="match status" value="1"/>
</dbReference>
<dbReference type="Gene3D" id="1.20.1270.10">
    <property type="match status" value="1"/>
</dbReference>
<dbReference type="Gene3D" id="3.30.420.40">
    <property type="match status" value="2"/>
</dbReference>
<dbReference type="Gene3D" id="3.90.640.10">
    <property type="entry name" value="Actin, Chain A, domain 4"/>
    <property type="match status" value="1"/>
</dbReference>
<dbReference type="Gene3D" id="2.60.34.10">
    <property type="entry name" value="Substrate Binding Domain Of DNAk, Chain A, domain 1"/>
    <property type="match status" value="1"/>
</dbReference>
<dbReference type="HAMAP" id="MF_00679">
    <property type="entry name" value="HscA"/>
    <property type="match status" value="1"/>
</dbReference>
<dbReference type="InterPro" id="IPR043129">
    <property type="entry name" value="ATPase_NBD"/>
</dbReference>
<dbReference type="InterPro" id="IPR018181">
    <property type="entry name" value="Heat_shock_70_CS"/>
</dbReference>
<dbReference type="InterPro" id="IPR042039">
    <property type="entry name" value="HscA_NBD"/>
</dbReference>
<dbReference type="InterPro" id="IPR029048">
    <property type="entry name" value="HSP70_C_sf"/>
</dbReference>
<dbReference type="InterPro" id="IPR029047">
    <property type="entry name" value="HSP70_peptide-bd_sf"/>
</dbReference>
<dbReference type="InterPro" id="IPR013126">
    <property type="entry name" value="Hsp_70_fam"/>
</dbReference>
<dbReference type="InterPro" id="IPR010236">
    <property type="entry name" value="ISC_FeS_clus_asmbl_HscA"/>
</dbReference>
<dbReference type="NCBIfam" id="TIGR01991">
    <property type="entry name" value="HscA"/>
    <property type="match status" value="1"/>
</dbReference>
<dbReference type="NCBIfam" id="NF003520">
    <property type="entry name" value="PRK05183.1"/>
    <property type="match status" value="1"/>
</dbReference>
<dbReference type="PANTHER" id="PTHR19375">
    <property type="entry name" value="HEAT SHOCK PROTEIN 70KDA"/>
    <property type="match status" value="1"/>
</dbReference>
<dbReference type="Pfam" id="PF00012">
    <property type="entry name" value="HSP70"/>
    <property type="match status" value="1"/>
</dbReference>
<dbReference type="PRINTS" id="PR00301">
    <property type="entry name" value="HEATSHOCK70"/>
</dbReference>
<dbReference type="SUPFAM" id="SSF53067">
    <property type="entry name" value="Actin-like ATPase domain"/>
    <property type="match status" value="2"/>
</dbReference>
<dbReference type="SUPFAM" id="SSF100934">
    <property type="entry name" value="Heat shock protein 70kD (HSP70), C-terminal subdomain"/>
    <property type="match status" value="1"/>
</dbReference>
<dbReference type="SUPFAM" id="SSF100920">
    <property type="entry name" value="Heat shock protein 70kD (HSP70), peptide-binding domain"/>
    <property type="match status" value="1"/>
</dbReference>
<dbReference type="PROSITE" id="PS00297">
    <property type="entry name" value="HSP70_1"/>
    <property type="match status" value="1"/>
</dbReference>
<dbReference type="PROSITE" id="PS00329">
    <property type="entry name" value="HSP70_2"/>
    <property type="match status" value="1"/>
</dbReference>
<dbReference type="PROSITE" id="PS01036">
    <property type="entry name" value="HSP70_3"/>
    <property type="match status" value="1"/>
</dbReference>
<comment type="function">
    <text evidence="1">Chaperone involved in the maturation of iron-sulfur cluster-containing proteins. Has a low intrinsic ATPase activity which is markedly stimulated by HscB. Involved in the maturation of IscU.</text>
</comment>
<comment type="similarity">
    <text evidence="1">Belongs to the heat shock protein 70 family.</text>
</comment>
<proteinExistence type="inferred from homology"/>
<evidence type="ECO:0000255" key="1">
    <source>
        <dbReference type="HAMAP-Rule" id="MF_00679"/>
    </source>
</evidence>
<protein>
    <recommendedName>
        <fullName evidence="1">Chaperone protein HscA</fullName>
    </recommendedName>
    <alternativeName>
        <fullName evidence="1">Hsc66</fullName>
    </alternativeName>
</protein>
<keyword id="KW-0067">ATP-binding</keyword>
<keyword id="KW-0143">Chaperone</keyword>
<keyword id="KW-0547">Nucleotide-binding</keyword>